<feature type="initiator methionine" description="Removed" evidence="3">
    <location>
        <position position="1"/>
    </location>
</feature>
<feature type="chain" id="PRO_0000305236" description="Ran-binding protein 10">
    <location>
        <begin position="2"/>
        <end position="620"/>
    </location>
</feature>
<feature type="domain" description="B30.2/SPRY" evidence="6">
    <location>
        <begin position="35"/>
        <end position="222"/>
    </location>
</feature>
<feature type="domain" description="LisH" evidence="5">
    <location>
        <begin position="253"/>
        <end position="285"/>
    </location>
</feature>
<feature type="domain" description="CTLH" evidence="4">
    <location>
        <begin position="291"/>
        <end position="348"/>
    </location>
</feature>
<feature type="region of interest" description="Disordered" evidence="7">
    <location>
        <begin position="1"/>
        <end position="34"/>
    </location>
</feature>
<feature type="region of interest" description="Disordered" evidence="7">
    <location>
        <begin position="347"/>
        <end position="459"/>
    </location>
</feature>
<feature type="compositionally biased region" description="Polar residues" evidence="7">
    <location>
        <begin position="347"/>
        <end position="398"/>
    </location>
</feature>
<feature type="compositionally biased region" description="Low complexity" evidence="7">
    <location>
        <begin position="409"/>
        <end position="436"/>
    </location>
</feature>
<feature type="compositionally biased region" description="Polar residues" evidence="7">
    <location>
        <begin position="437"/>
        <end position="450"/>
    </location>
</feature>
<feature type="modified residue" description="N-acetylalanine" evidence="3">
    <location>
        <position position="2"/>
    </location>
</feature>
<feature type="modified residue" description="Phosphoserine" evidence="3">
    <location>
        <position position="361"/>
    </location>
</feature>
<feature type="modified residue" description="Phosphotyrosine" evidence="2">
    <location>
        <position position="362"/>
    </location>
</feature>
<feature type="modified residue" description="Phosphoserine" evidence="3">
    <location>
        <position position="365"/>
    </location>
</feature>
<feature type="modified residue" description="Phosphoserine" evidence="2">
    <location>
        <position position="367"/>
    </location>
</feature>
<feature type="modified residue" description="Phosphoserine" evidence="3">
    <location>
        <position position="369"/>
    </location>
</feature>
<feature type="modified residue" description="Phosphoserine" evidence="3">
    <location>
        <position position="422"/>
    </location>
</feature>
<feature type="modified residue" description="Phosphoserine" evidence="2">
    <location>
        <position position="451"/>
    </location>
</feature>
<feature type="modified residue" description="Phosphoserine" evidence="2">
    <location>
        <position position="453"/>
    </location>
</feature>
<reference key="1">
    <citation type="submission" date="2007-02" db="EMBL/GenBank/DDBJ databases">
        <authorList>
            <consortium name="NIH - Mammalian Gene Collection (MGC) project"/>
        </authorList>
    </citation>
    <scope>NUCLEOTIDE SEQUENCE [LARGE SCALE MRNA]</scope>
    <source>
        <strain>Hereford</strain>
        <tissue>Fetal skin</tissue>
    </source>
</reference>
<evidence type="ECO:0000250" key="1"/>
<evidence type="ECO:0000250" key="2">
    <source>
        <dbReference type="UniProtKB" id="Q6VN19"/>
    </source>
</evidence>
<evidence type="ECO:0000250" key="3">
    <source>
        <dbReference type="UniProtKB" id="Q6VN20"/>
    </source>
</evidence>
<evidence type="ECO:0000255" key="4">
    <source>
        <dbReference type="PROSITE-ProRule" id="PRU00058"/>
    </source>
</evidence>
<evidence type="ECO:0000255" key="5">
    <source>
        <dbReference type="PROSITE-ProRule" id="PRU00126"/>
    </source>
</evidence>
<evidence type="ECO:0000255" key="6">
    <source>
        <dbReference type="PROSITE-ProRule" id="PRU00548"/>
    </source>
</evidence>
<evidence type="ECO:0000256" key="7">
    <source>
        <dbReference type="SAM" id="MobiDB-lite"/>
    </source>
</evidence>
<evidence type="ECO:0000305" key="8"/>
<sequence length="620" mass="67249">MAAATADPGAGSPQVGDSSGGATGCGLPSPGEQELSRRLQRLYPAVNQHETPLPRSWSPKDKYNYIGLSQGNLRVHYKGHGKNHKDAASVRATHPIPAACGIYYFEVKIVSKGRDGYMGIGLSAQGVNMNRLPGWDKHSYGYHGDDGHSFCSSGTGQPYGPTFTTGDVIGCCVNLINGTCFYTKNGHSLGIAFTDLPANLYPTVGLQTPGEIVDANFGQQPFLFDIEDYMREWRAKVQGTVHCFPISARLGEWQAVLQNMVSSYLVHHGYCATATAFARMTETPIQEEQASIKNRQKIQKLVLEGRVGEAIETTQRFYPGLLEHNPNLLFMLKCRQFVEMVNGTDSEVRSLSSRSPKSQDSYPGSPSLSPRHGPTSSHTHNTGADSPSCSNGVASTKSKQNHSKYPAPSSSSSSSSSSSSSSPSSVNYSESNSTDSTKSQPHSSTSNQETSDSEMEMEAEHYPNGVLESMSTRIVNGAYKHEDLQTDESSMDDGHPRRQLCGGNQAATERIILFGRELQALSEQLGREYGKDLAHTEMLQDAFSLLAYSDPWSCPVGQQLDPIQREPVCAALNSAILESQNLPKQPPLMLALGQASECLRLMARAGLGSCSFARVDDYLH</sequence>
<accession>A3KMV8</accession>
<organism>
    <name type="scientific">Bos taurus</name>
    <name type="common">Bovine</name>
    <dbReference type="NCBI Taxonomy" id="9913"/>
    <lineage>
        <taxon>Eukaryota</taxon>
        <taxon>Metazoa</taxon>
        <taxon>Chordata</taxon>
        <taxon>Craniata</taxon>
        <taxon>Vertebrata</taxon>
        <taxon>Euteleostomi</taxon>
        <taxon>Mammalia</taxon>
        <taxon>Eutheria</taxon>
        <taxon>Laurasiatheria</taxon>
        <taxon>Artiodactyla</taxon>
        <taxon>Ruminantia</taxon>
        <taxon>Pecora</taxon>
        <taxon>Bovidae</taxon>
        <taxon>Bovinae</taxon>
        <taxon>Bos</taxon>
    </lineage>
</organism>
<gene>
    <name type="primary">RANBP10</name>
</gene>
<dbReference type="EMBL" id="BC133307">
    <property type="protein sequence ID" value="AAI33308.1"/>
    <property type="molecule type" value="mRNA"/>
</dbReference>
<dbReference type="RefSeq" id="NP_001091594.1">
    <property type="nucleotide sequence ID" value="NM_001098125.1"/>
</dbReference>
<dbReference type="SMR" id="A3KMV8"/>
<dbReference type="FunCoup" id="A3KMV8">
    <property type="interactions" value="2311"/>
</dbReference>
<dbReference type="STRING" id="9913.ENSBTAP00000073565"/>
<dbReference type="PaxDb" id="9913-ENSBTAP00000043820"/>
<dbReference type="GeneID" id="519736"/>
<dbReference type="KEGG" id="bta:519736"/>
<dbReference type="CTD" id="57610"/>
<dbReference type="eggNOG" id="KOG1477">
    <property type="taxonomic scope" value="Eukaryota"/>
</dbReference>
<dbReference type="InParanoid" id="A3KMV8"/>
<dbReference type="OrthoDB" id="25503at2759"/>
<dbReference type="Proteomes" id="UP000009136">
    <property type="component" value="Unplaced"/>
</dbReference>
<dbReference type="GO" id="GO:0005737">
    <property type="term" value="C:cytoplasm"/>
    <property type="evidence" value="ECO:0000318"/>
    <property type="project" value="GO_Central"/>
</dbReference>
<dbReference type="GO" id="GO:0005829">
    <property type="term" value="C:cytosol"/>
    <property type="evidence" value="ECO:0007669"/>
    <property type="project" value="UniProtKB-SubCell"/>
</dbReference>
<dbReference type="GO" id="GO:0005634">
    <property type="term" value="C:nucleus"/>
    <property type="evidence" value="ECO:0007669"/>
    <property type="project" value="UniProtKB-SubCell"/>
</dbReference>
<dbReference type="GO" id="GO:0007010">
    <property type="term" value="P:cytoskeleton organization"/>
    <property type="evidence" value="ECO:0000318"/>
    <property type="project" value="GO_Central"/>
</dbReference>
<dbReference type="CDD" id="cd12909">
    <property type="entry name" value="SPRY_RanBP9_10"/>
    <property type="match status" value="1"/>
</dbReference>
<dbReference type="FunFam" id="2.60.120.920:FF:000011">
    <property type="entry name" value="RAN binding protein 10"/>
    <property type="match status" value="1"/>
</dbReference>
<dbReference type="Gene3D" id="2.60.120.920">
    <property type="match status" value="1"/>
</dbReference>
<dbReference type="InterPro" id="IPR001870">
    <property type="entry name" value="B30.2/SPRY"/>
</dbReference>
<dbReference type="InterPro" id="IPR043136">
    <property type="entry name" value="B30.2/SPRY_sf"/>
</dbReference>
<dbReference type="InterPro" id="IPR013320">
    <property type="entry name" value="ConA-like_dom_sf"/>
</dbReference>
<dbReference type="InterPro" id="IPR013144">
    <property type="entry name" value="CRA_dom"/>
</dbReference>
<dbReference type="InterPro" id="IPR024964">
    <property type="entry name" value="CTLH/CRA"/>
</dbReference>
<dbReference type="InterPro" id="IPR006595">
    <property type="entry name" value="CTLH_C"/>
</dbReference>
<dbReference type="InterPro" id="IPR006594">
    <property type="entry name" value="LisH"/>
</dbReference>
<dbReference type="InterPro" id="IPR003877">
    <property type="entry name" value="SPRY_dom"/>
</dbReference>
<dbReference type="InterPro" id="IPR035782">
    <property type="entry name" value="SPRY_RanBP9/10"/>
</dbReference>
<dbReference type="InterPro" id="IPR050618">
    <property type="entry name" value="Ubq-SigPath_Reg"/>
</dbReference>
<dbReference type="PANTHER" id="PTHR12864">
    <property type="entry name" value="RAN BINDING PROTEIN 9-RELATED"/>
    <property type="match status" value="1"/>
</dbReference>
<dbReference type="Pfam" id="PF10607">
    <property type="entry name" value="CTLH"/>
    <property type="match status" value="2"/>
</dbReference>
<dbReference type="Pfam" id="PF08513">
    <property type="entry name" value="LisH"/>
    <property type="match status" value="1"/>
</dbReference>
<dbReference type="Pfam" id="PF00622">
    <property type="entry name" value="SPRY"/>
    <property type="match status" value="1"/>
</dbReference>
<dbReference type="SMART" id="SM00757">
    <property type="entry name" value="CRA"/>
    <property type="match status" value="1"/>
</dbReference>
<dbReference type="SMART" id="SM00668">
    <property type="entry name" value="CTLH"/>
    <property type="match status" value="1"/>
</dbReference>
<dbReference type="SMART" id="SM00449">
    <property type="entry name" value="SPRY"/>
    <property type="match status" value="1"/>
</dbReference>
<dbReference type="SUPFAM" id="SSF49899">
    <property type="entry name" value="Concanavalin A-like lectins/glucanases"/>
    <property type="match status" value="1"/>
</dbReference>
<dbReference type="PROSITE" id="PS50188">
    <property type="entry name" value="B302_SPRY"/>
    <property type="match status" value="1"/>
</dbReference>
<dbReference type="PROSITE" id="PS50897">
    <property type="entry name" value="CTLH"/>
    <property type="match status" value="1"/>
</dbReference>
<dbReference type="PROSITE" id="PS50896">
    <property type="entry name" value="LISH"/>
    <property type="match status" value="1"/>
</dbReference>
<protein>
    <recommendedName>
        <fullName>Ran-binding protein 10</fullName>
        <shortName>RanBP10</shortName>
    </recommendedName>
</protein>
<keyword id="KW-0007">Acetylation</keyword>
<keyword id="KW-0963">Cytoplasm</keyword>
<keyword id="KW-0539">Nucleus</keyword>
<keyword id="KW-0597">Phosphoprotein</keyword>
<keyword id="KW-1185">Reference proteome</keyword>
<comment type="function">
    <text evidence="2 3">May act as an adapter protein to couple membrane receptors to intracellular signaling pathways. Core component of the CTLH E3 ubiquitin-protein ligase complex that selectively accepts ubiquitin from UBE2H and mediates ubiquitination and subsequent proteasomal degradation of the transcription factor HBP1. Enhances dihydrotestosterone-induced transactivation activity of AR, as well as dexamethasone-induced transactivation activity of NR3C1, but does not affect estrogen-induced transactivation (By similarity). Acts as a guanine nucleotide exchange factor (GEF) for RAN GTPase. May play an essential role in hemostasis and in maintaining microtubule dynamics with respect to both platelet shape and function (By similarity).</text>
</comment>
<comment type="subunit">
    <text evidence="2 3">May form homodimers. Identified in the CTLH complex that contains GID4, RANBP9 and/or RANBP10, MKLN1, MAEA, RMND5A (or alternatively its paralog RMND5B), GID8, ARMC8, WDR26 and YPEL5. Within this complex, MAEA, RMND5A (or alternatively its paralog RMND5B), GID8, WDR26, and RANBP9 and/or RANBP10 form the catalytic core, while GID4, MKLN1, ARMC8 and YPEL5 have ancillary roles. Interacts with RAN and RANBP9. Interacts with the HGF receptor MET. Interacts with AR. Interacts with TUBB1. Interacts with YPEL5 (By similarity). May interact with TUBB5. Interacts with DDX4 (By similarity).</text>
</comment>
<comment type="subcellular location">
    <subcellularLocation>
        <location evidence="3">Cytoplasm</location>
        <location evidence="3">Cytosol</location>
    </subcellularLocation>
    <subcellularLocation>
        <location evidence="3">Nucleus</location>
    </subcellularLocation>
</comment>
<comment type="domain">
    <text evidence="1">The SPRY domain mediates the interaction with MET.</text>
</comment>
<comment type="similarity">
    <text evidence="8">Belongs to the RANBP9/10 family.</text>
</comment>
<proteinExistence type="evidence at transcript level"/>
<name>RBP10_BOVIN</name>